<evidence type="ECO:0000255" key="1">
    <source>
        <dbReference type="HAMAP-Rule" id="MF_00817"/>
    </source>
</evidence>
<sequence>MHPAAEHSPLGKSSEYIATYTPSLLFPIPRAAKWAELGLTAQTLPYKGVDFWNCYELSWLLPSGKPVVAIAEFSIPADSPNIIESKSFKLYLNSLNQTAFDGAARVQATLEKDLSAAAGKLVGVRIRNLAEIEEEGVAVLPGVCIDELDITVSSYDQPQPELLRCDDSQVIEEAVHSHLLKSNCPVTSQPDWGSVVVEYRGAALDHASLLAYIVSFRQHSDFHEQCVERIFLDLQRLLKPEKLTVYARYVRRGGLDINPYRSTEVLDVDNRRLARQ</sequence>
<proteinExistence type="inferred from homology"/>
<organism>
    <name type="scientific">Pseudomonas syringae pv. tomato (strain ATCC BAA-871 / DC3000)</name>
    <dbReference type="NCBI Taxonomy" id="223283"/>
    <lineage>
        <taxon>Bacteria</taxon>
        <taxon>Pseudomonadati</taxon>
        <taxon>Pseudomonadota</taxon>
        <taxon>Gammaproteobacteria</taxon>
        <taxon>Pseudomonadales</taxon>
        <taxon>Pseudomonadaceae</taxon>
        <taxon>Pseudomonas</taxon>
    </lineage>
</organism>
<protein>
    <recommendedName>
        <fullName evidence="1">NADPH-dependent 7-cyano-7-deazaguanine reductase</fullName>
        <ecNumber evidence="1">1.7.1.13</ecNumber>
    </recommendedName>
    <alternativeName>
        <fullName evidence="1">7-cyano-7-carbaguanine reductase</fullName>
    </alternativeName>
    <alternativeName>
        <fullName evidence="1">NADPH-dependent nitrile oxidoreductase</fullName>
    </alternativeName>
    <alternativeName>
        <fullName evidence="1">PreQ(0) reductase</fullName>
    </alternativeName>
</protein>
<keyword id="KW-0963">Cytoplasm</keyword>
<keyword id="KW-0521">NADP</keyword>
<keyword id="KW-0560">Oxidoreductase</keyword>
<keyword id="KW-0671">Queuosine biosynthesis</keyword>
<keyword id="KW-1185">Reference proteome</keyword>
<comment type="function">
    <text evidence="1">Catalyzes the NADPH-dependent reduction of 7-cyano-7-deazaguanine (preQ0) to 7-aminomethyl-7-deazaguanine (preQ1).</text>
</comment>
<comment type="catalytic activity">
    <reaction evidence="1">
        <text>7-aminomethyl-7-carbaguanine + 2 NADP(+) = 7-cyano-7-deazaguanine + 2 NADPH + 3 H(+)</text>
        <dbReference type="Rhea" id="RHEA:13409"/>
        <dbReference type="ChEBI" id="CHEBI:15378"/>
        <dbReference type="ChEBI" id="CHEBI:45075"/>
        <dbReference type="ChEBI" id="CHEBI:57783"/>
        <dbReference type="ChEBI" id="CHEBI:58349"/>
        <dbReference type="ChEBI" id="CHEBI:58703"/>
        <dbReference type="EC" id="1.7.1.13"/>
    </reaction>
</comment>
<comment type="pathway">
    <text evidence="1">tRNA modification; tRNA-queuosine biosynthesis.</text>
</comment>
<comment type="subunit">
    <text evidence="1">Homodimer.</text>
</comment>
<comment type="subcellular location">
    <subcellularLocation>
        <location evidence="1">Cytoplasm</location>
    </subcellularLocation>
</comment>
<comment type="similarity">
    <text evidence="1">Belongs to the GTP cyclohydrolase I family. QueF type 2 subfamily.</text>
</comment>
<dbReference type="EC" id="1.7.1.13" evidence="1"/>
<dbReference type="EMBL" id="AE016853">
    <property type="protein sequence ID" value="AAO55629.1"/>
    <property type="molecule type" value="Genomic_DNA"/>
</dbReference>
<dbReference type="RefSeq" id="NP_791934.1">
    <property type="nucleotide sequence ID" value="NC_004578.1"/>
</dbReference>
<dbReference type="RefSeq" id="WP_005771341.1">
    <property type="nucleotide sequence ID" value="NC_004578.1"/>
</dbReference>
<dbReference type="SMR" id="Q884I1"/>
<dbReference type="STRING" id="223283.PSPTO_2112"/>
<dbReference type="GeneID" id="1183759"/>
<dbReference type="KEGG" id="pst:PSPTO_2112"/>
<dbReference type="PATRIC" id="fig|223283.9.peg.2143"/>
<dbReference type="eggNOG" id="COG0780">
    <property type="taxonomic scope" value="Bacteria"/>
</dbReference>
<dbReference type="eggNOG" id="COG2904">
    <property type="taxonomic scope" value="Bacteria"/>
</dbReference>
<dbReference type="HOGENOM" id="CLU_054738_0_0_6"/>
<dbReference type="OrthoDB" id="9789995at2"/>
<dbReference type="PhylomeDB" id="Q884I1"/>
<dbReference type="UniPathway" id="UPA00392"/>
<dbReference type="Proteomes" id="UP000002515">
    <property type="component" value="Chromosome"/>
</dbReference>
<dbReference type="GO" id="GO:0005737">
    <property type="term" value="C:cytoplasm"/>
    <property type="evidence" value="ECO:0007669"/>
    <property type="project" value="UniProtKB-SubCell"/>
</dbReference>
<dbReference type="GO" id="GO:0033739">
    <property type="term" value="F:preQ1 synthase activity"/>
    <property type="evidence" value="ECO:0007669"/>
    <property type="project" value="UniProtKB-UniRule"/>
</dbReference>
<dbReference type="GO" id="GO:0008616">
    <property type="term" value="P:queuosine biosynthetic process"/>
    <property type="evidence" value="ECO:0007669"/>
    <property type="project" value="UniProtKB-UniRule"/>
</dbReference>
<dbReference type="GO" id="GO:0006400">
    <property type="term" value="P:tRNA modification"/>
    <property type="evidence" value="ECO:0007669"/>
    <property type="project" value="UniProtKB-UniRule"/>
</dbReference>
<dbReference type="Gene3D" id="3.30.1130.10">
    <property type="match status" value="2"/>
</dbReference>
<dbReference type="HAMAP" id="MF_00817">
    <property type="entry name" value="QueF_type2"/>
    <property type="match status" value="1"/>
</dbReference>
<dbReference type="InterPro" id="IPR043133">
    <property type="entry name" value="GTP-CH-I_C/QueF"/>
</dbReference>
<dbReference type="InterPro" id="IPR050084">
    <property type="entry name" value="NADPH_dep_7-cyano-7-deazaG_red"/>
</dbReference>
<dbReference type="InterPro" id="IPR029500">
    <property type="entry name" value="QueF"/>
</dbReference>
<dbReference type="InterPro" id="IPR029139">
    <property type="entry name" value="QueF_N"/>
</dbReference>
<dbReference type="InterPro" id="IPR016428">
    <property type="entry name" value="QueF_type2"/>
</dbReference>
<dbReference type="NCBIfam" id="TIGR03138">
    <property type="entry name" value="QueF"/>
    <property type="match status" value="1"/>
</dbReference>
<dbReference type="PANTHER" id="PTHR34354">
    <property type="entry name" value="NADPH-DEPENDENT 7-CYANO-7-DEAZAGUANINE REDUCTASE"/>
    <property type="match status" value="1"/>
</dbReference>
<dbReference type="PANTHER" id="PTHR34354:SF1">
    <property type="entry name" value="NADPH-DEPENDENT 7-CYANO-7-DEAZAGUANINE REDUCTASE"/>
    <property type="match status" value="1"/>
</dbReference>
<dbReference type="Pfam" id="PF14489">
    <property type="entry name" value="QueF"/>
    <property type="match status" value="1"/>
</dbReference>
<dbReference type="Pfam" id="PF14819">
    <property type="entry name" value="QueF_N"/>
    <property type="match status" value="1"/>
</dbReference>
<dbReference type="PIRSF" id="PIRSF004750">
    <property type="entry name" value="Nitrile_oxidored_YqcD_prd"/>
    <property type="match status" value="1"/>
</dbReference>
<dbReference type="SUPFAM" id="SSF55620">
    <property type="entry name" value="Tetrahydrobiopterin biosynthesis enzymes-like"/>
    <property type="match status" value="1"/>
</dbReference>
<feature type="chain" id="PRO_0000163049" description="NADPH-dependent 7-cyano-7-deazaguanine reductase">
    <location>
        <begin position="1"/>
        <end position="276"/>
    </location>
</feature>
<feature type="active site" description="Thioimide intermediate" evidence="1">
    <location>
        <position position="184"/>
    </location>
</feature>
<feature type="active site" description="Proton donor" evidence="1">
    <location>
        <position position="191"/>
    </location>
</feature>
<feature type="binding site" evidence="1">
    <location>
        <begin position="83"/>
        <end position="85"/>
    </location>
    <ligand>
        <name>substrate</name>
    </ligand>
</feature>
<feature type="binding site" evidence="1">
    <location>
        <begin position="85"/>
        <end position="86"/>
    </location>
    <ligand>
        <name>NADPH</name>
        <dbReference type="ChEBI" id="CHEBI:57783"/>
    </ligand>
</feature>
<feature type="binding site" evidence="1">
    <location>
        <begin position="223"/>
        <end position="224"/>
    </location>
    <ligand>
        <name>substrate</name>
    </ligand>
</feature>
<feature type="binding site" evidence="1">
    <location>
        <begin position="252"/>
        <end position="253"/>
    </location>
    <ligand>
        <name>NADPH</name>
        <dbReference type="ChEBI" id="CHEBI:57783"/>
    </ligand>
</feature>
<reference key="1">
    <citation type="journal article" date="2003" name="Proc. Natl. Acad. Sci. U.S.A.">
        <title>The complete genome sequence of the Arabidopsis and tomato pathogen Pseudomonas syringae pv. tomato DC3000.</title>
        <authorList>
            <person name="Buell C.R."/>
            <person name="Joardar V."/>
            <person name="Lindeberg M."/>
            <person name="Selengut J."/>
            <person name="Paulsen I.T."/>
            <person name="Gwinn M.L."/>
            <person name="Dodson R.J."/>
            <person name="DeBoy R.T."/>
            <person name="Durkin A.S."/>
            <person name="Kolonay J.F."/>
            <person name="Madupu R."/>
            <person name="Daugherty S.C."/>
            <person name="Brinkac L.M."/>
            <person name="Beanan M.J."/>
            <person name="Haft D.H."/>
            <person name="Nelson W.C."/>
            <person name="Davidsen T.M."/>
            <person name="Zafar N."/>
            <person name="Zhou L."/>
            <person name="Liu J."/>
            <person name="Yuan Q."/>
            <person name="Khouri H.M."/>
            <person name="Fedorova N.B."/>
            <person name="Tran B."/>
            <person name="Russell D."/>
            <person name="Berry K.J."/>
            <person name="Utterback T.R."/>
            <person name="Van Aken S.E."/>
            <person name="Feldblyum T.V."/>
            <person name="D'Ascenzo M."/>
            <person name="Deng W.-L."/>
            <person name="Ramos A.R."/>
            <person name="Alfano J.R."/>
            <person name="Cartinhour S."/>
            <person name="Chatterjee A.K."/>
            <person name="Delaney T.P."/>
            <person name="Lazarowitz S.G."/>
            <person name="Martin G.B."/>
            <person name="Schneider D.J."/>
            <person name="Tang X."/>
            <person name="Bender C.L."/>
            <person name="White O."/>
            <person name="Fraser C.M."/>
            <person name="Collmer A."/>
        </authorList>
    </citation>
    <scope>NUCLEOTIDE SEQUENCE [LARGE SCALE GENOMIC DNA]</scope>
    <source>
        <strain>ATCC BAA-871 / DC3000</strain>
    </source>
</reference>
<accession>Q884I1</accession>
<name>QUEF_PSESM</name>
<gene>
    <name evidence="1" type="primary">queF</name>
    <name type="ordered locus">PSPTO_2112</name>
</gene>